<accession>Q98DD1</accession>
<name>DNAK_RHILO</name>
<sequence length="638" mass="68372">MAKVIGIDLGTTNSCIAIMDGKEPKVIENAEGARTTPSIVAISGDGERLVGQPAKRQAVTNPENTIFAVKRLIGRRYDDPVTEKDKKLVPYKIVKGDNGDAWVEAGGKKQSPSQISAMILQKMKETAEAYLGEKVEKAVITVPAYFNDAQRQATKDAGKIAGLEVLRIINEPTAAALAYGLDKKDGKTIAVYDLGGGTFDISVLEIGDGVFEVKSTNGDTFLGGEDFDMRLVEYLAAEFKKEQGIDLKNDKLALQRLKEAAEKAKIELSSTTQTEINLPFITADATGPKHLTLKLTRAKFESLVEDLVQRTIDPCKAALKDAGLKAGEIDEVVLVGGMTRMPKIQEIVKQFFGKEPHKGVNPDEVVALGAAIQAGVLQGDVKDVLLLDVTPLSLGIETLGGVFTRLIERNTTIPTKKSQVFSTAEDSQSAVTIRVFQGEREMAADNKALGQFDLVGIPPAPRGVPQIEVTFDIDANGIVNVSAKDKGTGKEHQIRIQASGGLSDADIEKMVKDAEANAETDKKRRAVVEARNQAEALVHSSEKSLKEYGDKVSEAERTAISDAIAALKTAAEGDDAADIEAKSQALAEASMKLGQAMYEASQKEAAEADAKADAAKDSDVVDADFEEIDEDDDKKKSA</sequence>
<feature type="chain" id="PRO_0000078524" description="Chaperone protein DnaK">
    <location>
        <begin position="1"/>
        <end position="638"/>
    </location>
</feature>
<feature type="region of interest" description="Disordered" evidence="2">
    <location>
        <begin position="598"/>
        <end position="638"/>
    </location>
</feature>
<feature type="compositionally biased region" description="Basic and acidic residues" evidence="2">
    <location>
        <begin position="601"/>
        <end position="619"/>
    </location>
</feature>
<feature type="compositionally biased region" description="Acidic residues" evidence="2">
    <location>
        <begin position="620"/>
        <end position="632"/>
    </location>
</feature>
<feature type="modified residue" description="Phosphothreonine; by autocatalysis" evidence="1">
    <location>
        <position position="198"/>
    </location>
</feature>
<organism>
    <name type="scientific">Mesorhizobium japonicum (strain LMG 29417 / CECT 9101 / MAFF 303099)</name>
    <name type="common">Mesorhizobium loti (strain MAFF 303099)</name>
    <dbReference type="NCBI Taxonomy" id="266835"/>
    <lineage>
        <taxon>Bacteria</taxon>
        <taxon>Pseudomonadati</taxon>
        <taxon>Pseudomonadota</taxon>
        <taxon>Alphaproteobacteria</taxon>
        <taxon>Hyphomicrobiales</taxon>
        <taxon>Phyllobacteriaceae</taxon>
        <taxon>Mesorhizobium</taxon>
    </lineage>
</organism>
<protein>
    <recommendedName>
        <fullName evidence="1">Chaperone protein DnaK</fullName>
    </recommendedName>
    <alternativeName>
        <fullName evidence="1">HSP70</fullName>
    </alternativeName>
    <alternativeName>
        <fullName evidence="1">Heat shock 70 kDa protein</fullName>
    </alternativeName>
    <alternativeName>
        <fullName evidence="1">Heat shock protein 70</fullName>
    </alternativeName>
</protein>
<evidence type="ECO:0000255" key="1">
    <source>
        <dbReference type="HAMAP-Rule" id="MF_00332"/>
    </source>
</evidence>
<evidence type="ECO:0000256" key="2">
    <source>
        <dbReference type="SAM" id="MobiDB-lite"/>
    </source>
</evidence>
<keyword id="KW-0067">ATP-binding</keyword>
<keyword id="KW-0143">Chaperone</keyword>
<keyword id="KW-0547">Nucleotide-binding</keyword>
<keyword id="KW-0597">Phosphoprotein</keyword>
<keyword id="KW-0346">Stress response</keyword>
<dbReference type="EMBL" id="BA000012">
    <property type="protein sequence ID" value="BAB51340.1"/>
    <property type="molecule type" value="Genomic_DNA"/>
</dbReference>
<dbReference type="RefSeq" id="WP_010912682.1">
    <property type="nucleotide sequence ID" value="NC_002678.2"/>
</dbReference>
<dbReference type="SMR" id="Q98DD1"/>
<dbReference type="GeneID" id="66680965"/>
<dbReference type="KEGG" id="mlo:mll4757"/>
<dbReference type="eggNOG" id="COG0443">
    <property type="taxonomic scope" value="Bacteria"/>
</dbReference>
<dbReference type="HOGENOM" id="CLU_005965_2_1_5"/>
<dbReference type="Proteomes" id="UP000000552">
    <property type="component" value="Chromosome"/>
</dbReference>
<dbReference type="GO" id="GO:0005524">
    <property type="term" value="F:ATP binding"/>
    <property type="evidence" value="ECO:0007669"/>
    <property type="project" value="UniProtKB-UniRule"/>
</dbReference>
<dbReference type="GO" id="GO:0140662">
    <property type="term" value="F:ATP-dependent protein folding chaperone"/>
    <property type="evidence" value="ECO:0007669"/>
    <property type="project" value="InterPro"/>
</dbReference>
<dbReference type="GO" id="GO:0051082">
    <property type="term" value="F:unfolded protein binding"/>
    <property type="evidence" value="ECO:0007669"/>
    <property type="project" value="InterPro"/>
</dbReference>
<dbReference type="CDD" id="cd11733">
    <property type="entry name" value="ASKHA_NBD_HSP70_HSPA9"/>
    <property type="match status" value="1"/>
</dbReference>
<dbReference type="FunFam" id="2.60.34.10:FF:000014">
    <property type="entry name" value="Chaperone protein DnaK HSP70"/>
    <property type="match status" value="1"/>
</dbReference>
<dbReference type="FunFam" id="3.30.420.40:FF:000020">
    <property type="entry name" value="Chaperone protein HscA homolog"/>
    <property type="match status" value="1"/>
</dbReference>
<dbReference type="FunFam" id="3.30.30.30:FF:000003">
    <property type="entry name" value="Heat shock protein 9"/>
    <property type="match status" value="1"/>
</dbReference>
<dbReference type="FunFam" id="1.20.1270.10:FF:000001">
    <property type="entry name" value="Molecular chaperone DnaK"/>
    <property type="match status" value="1"/>
</dbReference>
<dbReference type="FunFam" id="3.30.420.40:FF:000004">
    <property type="entry name" value="Molecular chaperone DnaK"/>
    <property type="match status" value="1"/>
</dbReference>
<dbReference type="FunFam" id="3.90.640.10:FF:000003">
    <property type="entry name" value="Molecular chaperone DnaK"/>
    <property type="match status" value="1"/>
</dbReference>
<dbReference type="Gene3D" id="1.20.1270.10">
    <property type="match status" value="1"/>
</dbReference>
<dbReference type="Gene3D" id="3.30.420.40">
    <property type="match status" value="2"/>
</dbReference>
<dbReference type="Gene3D" id="3.90.640.10">
    <property type="entry name" value="Actin, Chain A, domain 4"/>
    <property type="match status" value="1"/>
</dbReference>
<dbReference type="Gene3D" id="2.60.34.10">
    <property type="entry name" value="Substrate Binding Domain Of DNAk, Chain A, domain 1"/>
    <property type="match status" value="1"/>
</dbReference>
<dbReference type="HAMAP" id="MF_00332">
    <property type="entry name" value="DnaK"/>
    <property type="match status" value="1"/>
</dbReference>
<dbReference type="InterPro" id="IPR043129">
    <property type="entry name" value="ATPase_NBD"/>
</dbReference>
<dbReference type="InterPro" id="IPR012725">
    <property type="entry name" value="Chaperone_DnaK"/>
</dbReference>
<dbReference type="InterPro" id="IPR018181">
    <property type="entry name" value="Heat_shock_70_CS"/>
</dbReference>
<dbReference type="InterPro" id="IPR029048">
    <property type="entry name" value="HSP70_C_sf"/>
</dbReference>
<dbReference type="InterPro" id="IPR029047">
    <property type="entry name" value="HSP70_peptide-bd_sf"/>
</dbReference>
<dbReference type="InterPro" id="IPR013126">
    <property type="entry name" value="Hsp_70_fam"/>
</dbReference>
<dbReference type="NCBIfam" id="NF001413">
    <property type="entry name" value="PRK00290.1"/>
    <property type="match status" value="1"/>
</dbReference>
<dbReference type="NCBIfam" id="NF003520">
    <property type="entry name" value="PRK05183.1"/>
    <property type="match status" value="1"/>
</dbReference>
<dbReference type="NCBIfam" id="TIGR02350">
    <property type="entry name" value="prok_dnaK"/>
    <property type="match status" value="1"/>
</dbReference>
<dbReference type="PANTHER" id="PTHR19375">
    <property type="entry name" value="HEAT SHOCK PROTEIN 70KDA"/>
    <property type="match status" value="1"/>
</dbReference>
<dbReference type="Pfam" id="PF00012">
    <property type="entry name" value="HSP70"/>
    <property type="match status" value="1"/>
</dbReference>
<dbReference type="PRINTS" id="PR00301">
    <property type="entry name" value="HEATSHOCK70"/>
</dbReference>
<dbReference type="SUPFAM" id="SSF53067">
    <property type="entry name" value="Actin-like ATPase domain"/>
    <property type="match status" value="2"/>
</dbReference>
<dbReference type="SUPFAM" id="SSF100934">
    <property type="entry name" value="Heat shock protein 70kD (HSP70), C-terminal subdomain"/>
    <property type="match status" value="1"/>
</dbReference>
<dbReference type="SUPFAM" id="SSF100920">
    <property type="entry name" value="Heat shock protein 70kD (HSP70), peptide-binding domain"/>
    <property type="match status" value="1"/>
</dbReference>
<dbReference type="PROSITE" id="PS00297">
    <property type="entry name" value="HSP70_1"/>
    <property type="match status" value="1"/>
</dbReference>
<dbReference type="PROSITE" id="PS00329">
    <property type="entry name" value="HSP70_2"/>
    <property type="match status" value="1"/>
</dbReference>
<dbReference type="PROSITE" id="PS01036">
    <property type="entry name" value="HSP70_3"/>
    <property type="match status" value="1"/>
</dbReference>
<reference key="1">
    <citation type="journal article" date="2000" name="DNA Res.">
        <title>Complete genome structure of the nitrogen-fixing symbiotic bacterium Mesorhizobium loti.</title>
        <authorList>
            <person name="Kaneko T."/>
            <person name="Nakamura Y."/>
            <person name="Sato S."/>
            <person name="Asamizu E."/>
            <person name="Kato T."/>
            <person name="Sasamoto S."/>
            <person name="Watanabe A."/>
            <person name="Idesawa K."/>
            <person name="Ishikawa A."/>
            <person name="Kawashima K."/>
            <person name="Kimura T."/>
            <person name="Kishida Y."/>
            <person name="Kiyokawa C."/>
            <person name="Kohara M."/>
            <person name="Matsumoto M."/>
            <person name="Matsuno A."/>
            <person name="Mochizuki Y."/>
            <person name="Nakayama S."/>
            <person name="Nakazaki N."/>
            <person name="Shimpo S."/>
            <person name="Sugimoto M."/>
            <person name="Takeuchi C."/>
            <person name="Yamada M."/>
            <person name="Tabata S."/>
        </authorList>
    </citation>
    <scope>NUCLEOTIDE SEQUENCE [LARGE SCALE GENOMIC DNA]</scope>
    <source>
        <strain>LMG 29417 / CECT 9101 / MAFF 303099</strain>
    </source>
</reference>
<gene>
    <name evidence="1" type="primary">dnaK</name>
    <name type="ordered locus">mll4757</name>
</gene>
<proteinExistence type="inferred from homology"/>
<comment type="function">
    <text evidence="1">Acts as a chaperone.</text>
</comment>
<comment type="induction">
    <text evidence="1">By stress conditions e.g. heat shock.</text>
</comment>
<comment type="similarity">
    <text evidence="1">Belongs to the heat shock protein 70 family.</text>
</comment>